<accession>Q8DSI6</accession>
<gene>
    <name evidence="1" type="primary">nadD</name>
    <name type="ordered locus">SMU_1799</name>
</gene>
<reference key="1">
    <citation type="journal article" date="2002" name="Proc. Natl. Acad. Sci. U.S.A.">
        <title>Genome sequence of Streptococcus mutans UA159, a cariogenic dental pathogen.</title>
        <authorList>
            <person name="Ajdic D.J."/>
            <person name="McShan W.M."/>
            <person name="McLaughlin R.E."/>
            <person name="Savic G."/>
            <person name="Chang J."/>
            <person name="Carson M.B."/>
            <person name="Primeaux C."/>
            <person name="Tian R."/>
            <person name="Kenton S."/>
            <person name="Jia H.G."/>
            <person name="Lin S.P."/>
            <person name="Qian Y."/>
            <person name="Li S."/>
            <person name="Zhu H."/>
            <person name="Najar F.Z."/>
            <person name="Lai H."/>
            <person name="White J."/>
            <person name="Roe B.A."/>
            <person name="Ferretti J.J."/>
        </authorList>
    </citation>
    <scope>NUCLEOTIDE SEQUENCE [LARGE SCALE GENOMIC DNA]</scope>
    <source>
        <strain>ATCC 700610 / UA159</strain>
    </source>
</reference>
<name>NADD_STRMU</name>
<evidence type="ECO:0000255" key="1">
    <source>
        <dbReference type="HAMAP-Rule" id="MF_00244"/>
    </source>
</evidence>
<proteinExistence type="inferred from homology"/>
<organism>
    <name type="scientific">Streptococcus mutans serotype c (strain ATCC 700610 / UA159)</name>
    <dbReference type="NCBI Taxonomy" id="210007"/>
    <lineage>
        <taxon>Bacteria</taxon>
        <taxon>Bacillati</taxon>
        <taxon>Bacillota</taxon>
        <taxon>Bacilli</taxon>
        <taxon>Lactobacillales</taxon>
        <taxon>Streptococcaceae</taxon>
        <taxon>Streptococcus</taxon>
    </lineage>
</organism>
<protein>
    <recommendedName>
        <fullName evidence="1">Probable nicotinate-nucleotide adenylyltransferase</fullName>
        <ecNumber evidence="1">2.7.7.18</ecNumber>
    </recommendedName>
    <alternativeName>
        <fullName evidence="1">Deamido-NAD(+) diphosphorylase</fullName>
    </alternativeName>
    <alternativeName>
        <fullName evidence="1">Deamido-NAD(+) pyrophosphorylase</fullName>
    </alternativeName>
    <alternativeName>
        <fullName evidence="1">Nicotinate mononucleotide adenylyltransferase</fullName>
        <shortName evidence="1">NaMN adenylyltransferase</shortName>
    </alternativeName>
</protein>
<dbReference type="EC" id="2.7.7.18" evidence="1"/>
<dbReference type="EMBL" id="AE014133">
    <property type="protein sequence ID" value="AAN59424.1"/>
    <property type="molecule type" value="Genomic_DNA"/>
</dbReference>
<dbReference type="RefSeq" id="NP_722118.1">
    <property type="nucleotide sequence ID" value="NC_004350.2"/>
</dbReference>
<dbReference type="RefSeq" id="WP_002263507.1">
    <property type="nucleotide sequence ID" value="NC_004350.2"/>
</dbReference>
<dbReference type="SMR" id="Q8DSI6"/>
<dbReference type="STRING" id="210007.SMU_1799"/>
<dbReference type="KEGG" id="smu:SMU_1799"/>
<dbReference type="PATRIC" id="fig|210007.7.peg.1605"/>
<dbReference type="eggNOG" id="COG1057">
    <property type="taxonomic scope" value="Bacteria"/>
</dbReference>
<dbReference type="HOGENOM" id="CLU_069765_3_1_9"/>
<dbReference type="OrthoDB" id="5295945at2"/>
<dbReference type="PhylomeDB" id="Q8DSI6"/>
<dbReference type="UniPathway" id="UPA00253">
    <property type="reaction ID" value="UER00332"/>
</dbReference>
<dbReference type="Proteomes" id="UP000002512">
    <property type="component" value="Chromosome"/>
</dbReference>
<dbReference type="GO" id="GO:0005524">
    <property type="term" value="F:ATP binding"/>
    <property type="evidence" value="ECO:0007669"/>
    <property type="project" value="UniProtKB-KW"/>
</dbReference>
<dbReference type="GO" id="GO:0004515">
    <property type="term" value="F:nicotinate-nucleotide adenylyltransferase activity"/>
    <property type="evidence" value="ECO:0007669"/>
    <property type="project" value="UniProtKB-UniRule"/>
</dbReference>
<dbReference type="GO" id="GO:0009435">
    <property type="term" value="P:NAD biosynthetic process"/>
    <property type="evidence" value="ECO:0007669"/>
    <property type="project" value="UniProtKB-UniRule"/>
</dbReference>
<dbReference type="CDD" id="cd02165">
    <property type="entry name" value="NMNAT"/>
    <property type="match status" value="1"/>
</dbReference>
<dbReference type="FunFam" id="3.40.50.620:FF:000079">
    <property type="entry name" value="Probable nicotinate-nucleotide adenylyltransferase"/>
    <property type="match status" value="1"/>
</dbReference>
<dbReference type="Gene3D" id="3.40.50.620">
    <property type="entry name" value="HUPs"/>
    <property type="match status" value="1"/>
</dbReference>
<dbReference type="HAMAP" id="MF_00244">
    <property type="entry name" value="NaMN_adenylyltr"/>
    <property type="match status" value="1"/>
</dbReference>
<dbReference type="InterPro" id="IPR004821">
    <property type="entry name" value="Cyt_trans-like"/>
</dbReference>
<dbReference type="InterPro" id="IPR005248">
    <property type="entry name" value="NadD/NMNAT"/>
</dbReference>
<dbReference type="InterPro" id="IPR014729">
    <property type="entry name" value="Rossmann-like_a/b/a_fold"/>
</dbReference>
<dbReference type="NCBIfam" id="TIGR00125">
    <property type="entry name" value="cyt_tran_rel"/>
    <property type="match status" value="1"/>
</dbReference>
<dbReference type="NCBIfam" id="TIGR00482">
    <property type="entry name" value="nicotinate (nicotinamide) nucleotide adenylyltransferase"/>
    <property type="match status" value="1"/>
</dbReference>
<dbReference type="NCBIfam" id="NF000840">
    <property type="entry name" value="PRK00071.1-3"/>
    <property type="match status" value="1"/>
</dbReference>
<dbReference type="NCBIfam" id="NF000841">
    <property type="entry name" value="PRK00071.1-4"/>
    <property type="match status" value="1"/>
</dbReference>
<dbReference type="PANTHER" id="PTHR39321">
    <property type="entry name" value="NICOTINATE-NUCLEOTIDE ADENYLYLTRANSFERASE-RELATED"/>
    <property type="match status" value="1"/>
</dbReference>
<dbReference type="PANTHER" id="PTHR39321:SF3">
    <property type="entry name" value="PHOSPHOPANTETHEINE ADENYLYLTRANSFERASE"/>
    <property type="match status" value="1"/>
</dbReference>
<dbReference type="Pfam" id="PF01467">
    <property type="entry name" value="CTP_transf_like"/>
    <property type="match status" value="1"/>
</dbReference>
<dbReference type="SUPFAM" id="SSF52374">
    <property type="entry name" value="Nucleotidylyl transferase"/>
    <property type="match status" value="1"/>
</dbReference>
<feature type="chain" id="PRO_0000181452" description="Probable nicotinate-nucleotide adenylyltransferase">
    <location>
        <begin position="1"/>
        <end position="210"/>
    </location>
</feature>
<comment type="function">
    <text evidence="1">Catalyzes the reversible adenylation of nicotinate mononucleotide (NaMN) to nicotinic acid adenine dinucleotide (NaAD).</text>
</comment>
<comment type="catalytic activity">
    <reaction evidence="1">
        <text>nicotinate beta-D-ribonucleotide + ATP + H(+) = deamido-NAD(+) + diphosphate</text>
        <dbReference type="Rhea" id="RHEA:22860"/>
        <dbReference type="ChEBI" id="CHEBI:15378"/>
        <dbReference type="ChEBI" id="CHEBI:30616"/>
        <dbReference type="ChEBI" id="CHEBI:33019"/>
        <dbReference type="ChEBI" id="CHEBI:57502"/>
        <dbReference type="ChEBI" id="CHEBI:58437"/>
        <dbReference type="EC" id="2.7.7.18"/>
    </reaction>
</comment>
<comment type="pathway">
    <text evidence="1">Cofactor biosynthesis; NAD(+) biosynthesis; deamido-NAD(+) from nicotinate D-ribonucleotide: step 1/1.</text>
</comment>
<comment type="similarity">
    <text evidence="1">Belongs to the NadD family.</text>
</comment>
<keyword id="KW-0067">ATP-binding</keyword>
<keyword id="KW-0520">NAD</keyword>
<keyword id="KW-0547">Nucleotide-binding</keyword>
<keyword id="KW-0548">Nucleotidyltransferase</keyword>
<keyword id="KW-0662">Pyridine nucleotide biosynthesis</keyword>
<keyword id="KW-1185">Reference proteome</keyword>
<keyword id="KW-0808">Transferase</keyword>
<sequence length="210" mass="24441">MALELLTPFTKVELEEERKDKNRKQIGILGGNFNPVHNAHLLVADQVRQQLGLDEVLLMPEYKPPHVDKKATIDEKHRLKMLELAIKGIEGLAIETIELKRKGVSYTYDTMKDLIEQNPDVDYYFIIGADMVDYLPKWHKIDELIQMVQFVGVQRPKYKAGTSYPVIWVDVPLMDISSSMIRDFIRKNRKPNFLLPKLVLDYIEKEGLYQ</sequence>